<reference key="1">
    <citation type="journal article" date="2002" name="Nature">
        <title>The genome sequence of Schizosaccharomyces pombe.</title>
        <authorList>
            <person name="Wood V."/>
            <person name="Gwilliam R."/>
            <person name="Rajandream M.A."/>
            <person name="Lyne M.H."/>
            <person name="Lyne R."/>
            <person name="Stewart A."/>
            <person name="Sgouros J.G."/>
            <person name="Peat N."/>
            <person name="Hayles J."/>
            <person name="Baker S.G."/>
            <person name="Basham D."/>
            <person name="Bowman S."/>
            <person name="Brooks K."/>
            <person name="Brown D."/>
            <person name="Brown S."/>
            <person name="Chillingworth T."/>
            <person name="Churcher C.M."/>
            <person name="Collins M."/>
            <person name="Connor R."/>
            <person name="Cronin A."/>
            <person name="Davis P."/>
            <person name="Feltwell T."/>
            <person name="Fraser A."/>
            <person name="Gentles S."/>
            <person name="Goble A."/>
            <person name="Hamlin N."/>
            <person name="Harris D.E."/>
            <person name="Hidalgo J."/>
            <person name="Hodgson G."/>
            <person name="Holroyd S."/>
            <person name="Hornsby T."/>
            <person name="Howarth S."/>
            <person name="Huckle E.J."/>
            <person name="Hunt S."/>
            <person name="Jagels K."/>
            <person name="James K.D."/>
            <person name="Jones L."/>
            <person name="Jones M."/>
            <person name="Leather S."/>
            <person name="McDonald S."/>
            <person name="McLean J."/>
            <person name="Mooney P."/>
            <person name="Moule S."/>
            <person name="Mungall K.L."/>
            <person name="Murphy L.D."/>
            <person name="Niblett D."/>
            <person name="Odell C."/>
            <person name="Oliver K."/>
            <person name="O'Neil S."/>
            <person name="Pearson D."/>
            <person name="Quail M.A."/>
            <person name="Rabbinowitsch E."/>
            <person name="Rutherford K.M."/>
            <person name="Rutter S."/>
            <person name="Saunders D."/>
            <person name="Seeger K."/>
            <person name="Sharp S."/>
            <person name="Skelton J."/>
            <person name="Simmonds M.N."/>
            <person name="Squares R."/>
            <person name="Squares S."/>
            <person name="Stevens K."/>
            <person name="Taylor K."/>
            <person name="Taylor R.G."/>
            <person name="Tivey A."/>
            <person name="Walsh S.V."/>
            <person name="Warren T."/>
            <person name="Whitehead S."/>
            <person name="Woodward J.R."/>
            <person name="Volckaert G."/>
            <person name="Aert R."/>
            <person name="Robben J."/>
            <person name="Grymonprez B."/>
            <person name="Weltjens I."/>
            <person name="Vanstreels E."/>
            <person name="Rieger M."/>
            <person name="Schaefer M."/>
            <person name="Mueller-Auer S."/>
            <person name="Gabel C."/>
            <person name="Fuchs M."/>
            <person name="Duesterhoeft A."/>
            <person name="Fritzc C."/>
            <person name="Holzer E."/>
            <person name="Moestl D."/>
            <person name="Hilbert H."/>
            <person name="Borzym K."/>
            <person name="Langer I."/>
            <person name="Beck A."/>
            <person name="Lehrach H."/>
            <person name="Reinhardt R."/>
            <person name="Pohl T.M."/>
            <person name="Eger P."/>
            <person name="Zimmermann W."/>
            <person name="Wedler H."/>
            <person name="Wambutt R."/>
            <person name="Purnelle B."/>
            <person name="Goffeau A."/>
            <person name="Cadieu E."/>
            <person name="Dreano S."/>
            <person name="Gloux S."/>
            <person name="Lelaure V."/>
            <person name="Mottier S."/>
            <person name="Galibert F."/>
            <person name="Aves S.J."/>
            <person name="Xiang Z."/>
            <person name="Hunt C."/>
            <person name="Moore K."/>
            <person name="Hurst S.M."/>
            <person name="Lucas M."/>
            <person name="Rochet M."/>
            <person name="Gaillardin C."/>
            <person name="Tallada V.A."/>
            <person name="Garzon A."/>
            <person name="Thode G."/>
            <person name="Daga R.R."/>
            <person name="Cruzado L."/>
            <person name="Jimenez J."/>
            <person name="Sanchez M."/>
            <person name="del Rey F."/>
            <person name="Benito J."/>
            <person name="Dominguez A."/>
            <person name="Revuelta J.L."/>
            <person name="Moreno S."/>
            <person name="Armstrong J."/>
            <person name="Forsburg S.L."/>
            <person name="Cerutti L."/>
            <person name="Lowe T."/>
            <person name="McCombie W.R."/>
            <person name="Paulsen I."/>
            <person name="Potashkin J."/>
            <person name="Shpakovski G.V."/>
            <person name="Ussery D."/>
            <person name="Barrell B.G."/>
            <person name="Nurse P."/>
        </authorList>
    </citation>
    <scope>NUCLEOTIDE SEQUENCE [LARGE SCALE GENOMIC DNA]</scope>
    <source>
        <strain>972 / ATCC 24843</strain>
    </source>
</reference>
<reference key="2">
    <citation type="journal article" date="2006" name="Nat. Biotechnol.">
        <title>ORFeome cloning and global analysis of protein localization in the fission yeast Schizosaccharomyces pombe.</title>
        <authorList>
            <person name="Matsuyama A."/>
            <person name="Arai R."/>
            <person name="Yashiroda Y."/>
            <person name="Shirai A."/>
            <person name="Kamata A."/>
            <person name="Sekido S."/>
            <person name="Kobayashi Y."/>
            <person name="Hashimoto A."/>
            <person name="Hamamoto M."/>
            <person name="Hiraoka Y."/>
            <person name="Horinouchi S."/>
            <person name="Yoshida M."/>
        </authorList>
    </citation>
    <scope>SUBCELLULAR LOCATION [LARGE SCALE ANALYSIS]</scope>
</reference>
<evidence type="ECO:0000250" key="1">
    <source>
        <dbReference type="UniProtKB" id="P25659"/>
    </source>
</evidence>
<evidence type="ECO:0000250" key="2">
    <source>
        <dbReference type="UniProtKB" id="Q92530"/>
    </source>
</evidence>
<evidence type="ECO:0000256" key="3">
    <source>
        <dbReference type="SAM" id="MobiDB-lite"/>
    </source>
</evidence>
<evidence type="ECO:0000269" key="4">
    <source>
    </source>
</evidence>
<evidence type="ECO:0000305" key="5"/>
<evidence type="ECO:0000312" key="6">
    <source>
        <dbReference type="PomBase" id="SPAC15E1.10"/>
    </source>
</evidence>
<dbReference type="EMBL" id="CU329670">
    <property type="protein sequence ID" value="CAB52429.2"/>
    <property type="molecule type" value="Genomic_DNA"/>
</dbReference>
<dbReference type="PIR" id="T37725">
    <property type="entry name" value="T37725"/>
</dbReference>
<dbReference type="RefSeq" id="NP_594311.2">
    <property type="nucleotide sequence ID" value="NM_001019734.2"/>
</dbReference>
<dbReference type="BioGRID" id="279214">
    <property type="interactions" value="20"/>
</dbReference>
<dbReference type="STRING" id="284812.Q9UTI1"/>
<dbReference type="iPTMnet" id="Q9UTI1"/>
<dbReference type="PaxDb" id="4896-SPAC15E1.10.1"/>
<dbReference type="EnsemblFungi" id="SPAC15E1.10.1">
    <property type="protein sequence ID" value="SPAC15E1.10.1:pep"/>
    <property type="gene ID" value="SPAC15E1.10"/>
</dbReference>
<dbReference type="GeneID" id="2542764"/>
<dbReference type="KEGG" id="spo:2542764"/>
<dbReference type="PomBase" id="SPAC15E1.10"/>
<dbReference type="VEuPathDB" id="FungiDB:SPAC15E1.10"/>
<dbReference type="eggNOG" id="ENOG502RZMJ">
    <property type="taxonomic scope" value="Eukaryota"/>
</dbReference>
<dbReference type="HOGENOM" id="CLU_1027307_0_0_1"/>
<dbReference type="InParanoid" id="Q9UTI1"/>
<dbReference type="OMA" id="HPIFHPE"/>
<dbReference type="PRO" id="PR:Q9UTI1"/>
<dbReference type="Proteomes" id="UP000002485">
    <property type="component" value="Chromosome I"/>
</dbReference>
<dbReference type="GO" id="GO:0005829">
    <property type="term" value="C:cytosol"/>
    <property type="evidence" value="ECO:0007005"/>
    <property type="project" value="PomBase"/>
</dbReference>
<dbReference type="GO" id="GO:0005634">
    <property type="term" value="C:nucleus"/>
    <property type="evidence" value="ECO:0007005"/>
    <property type="project" value="PomBase"/>
</dbReference>
<dbReference type="GO" id="GO:0004866">
    <property type="term" value="F:endopeptidase inhibitor activity"/>
    <property type="evidence" value="ECO:0000250"/>
    <property type="project" value="PomBase"/>
</dbReference>
<dbReference type="GO" id="GO:0070628">
    <property type="term" value="F:proteasome binding"/>
    <property type="evidence" value="ECO:0000250"/>
    <property type="project" value="PomBase"/>
</dbReference>
<dbReference type="GO" id="GO:0006325">
    <property type="term" value="P:chromatin organization"/>
    <property type="evidence" value="ECO:0007669"/>
    <property type="project" value="UniProtKB-KW"/>
</dbReference>
<dbReference type="GO" id="GO:0043161">
    <property type="term" value="P:proteasome-mediated ubiquitin-dependent protein catabolic process"/>
    <property type="evidence" value="ECO:0000250"/>
    <property type="project" value="PomBase"/>
</dbReference>
<dbReference type="GO" id="GO:0006511">
    <property type="term" value="P:ubiquitin-dependent protein catabolic process"/>
    <property type="evidence" value="ECO:0000318"/>
    <property type="project" value="GO_Central"/>
</dbReference>
<dbReference type="InterPro" id="IPR045128">
    <property type="entry name" value="PI31-like"/>
</dbReference>
<dbReference type="InterPro" id="IPR013886">
    <property type="entry name" value="PI31_Prot_C"/>
</dbReference>
<dbReference type="PANTHER" id="PTHR13266">
    <property type="entry name" value="PROTEASOME INHIBITOR"/>
    <property type="match status" value="1"/>
</dbReference>
<dbReference type="PANTHER" id="PTHR13266:SF1">
    <property type="entry name" value="PROTEASOME INHIBITOR PI31 SUBUNIT"/>
    <property type="match status" value="1"/>
</dbReference>
<dbReference type="Pfam" id="PF08577">
    <property type="entry name" value="PI31_Prot_C"/>
    <property type="match status" value="1"/>
</dbReference>
<accession>Q9UTI1</accession>
<accession>Q9P773</accession>
<sequence>MNNPTSDDRLRFQQKCHKSMLNTGAIFKNCKLRNGDVLQEVTESLTEDSEFNYIVNESQNVSTRLIFWNKWIYILCANTSSNITATRIFRLDDDQPWNLESLVAEVCPVDTDNRLAEHAARTAKDTSANELNYESYQEKSRAPFGFAGPFGAMPGSQPMFPSIGASDLYPAGIGGSDMGNDGGMIPTFNHPIFHPENRSRNEQASANRTNIPPGARYDPTGPGDFRGFGRDERKPQFPFKGPRSQFPGEPDNDDFMPPGSSDMFM</sequence>
<name>FUB1_SCHPO</name>
<gene>
    <name evidence="6" type="ORF">SPAC15E1.10</name>
    <name type="ORF">SPAP7G5.01</name>
</gene>
<organism>
    <name type="scientific">Schizosaccharomyces pombe (strain 972 / ATCC 24843)</name>
    <name type="common">Fission yeast</name>
    <dbReference type="NCBI Taxonomy" id="284812"/>
    <lineage>
        <taxon>Eukaryota</taxon>
        <taxon>Fungi</taxon>
        <taxon>Dikarya</taxon>
        <taxon>Ascomycota</taxon>
        <taxon>Taphrinomycotina</taxon>
        <taxon>Schizosaccharomycetes</taxon>
        <taxon>Schizosaccharomycetales</taxon>
        <taxon>Schizosaccharomycetaceae</taxon>
        <taxon>Schizosaccharomyces</taxon>
    </lineage>
</organism>
<keyword id="KW-0156">Chromatin regulator</keyword>
<keyword id="KW-0963">Cytoplasm</keyword>
<keyword id="KW-0539">Nucleus</keyword>
<keyword id="KW-1185">Reference proteome</keyword>
<feature type="chain" id="PRO_0000116837" description="Silencing boundary-establishment protein FUB1-like protein">
    <location>
        <begin position="1"/>
        <end position="265"/>
    </location>
</feature>
<feature type="region of interest" description="Disordered" evidence="3">
    <location>
        <begin position="194"/>
        <end position="265"/>
    </location>
</feature>
<protein>
    <recommendedName>
        <fullName evidence="1 5">Silencing boundary-establishment protein FUB1-like protein</fullName>
    </recommendedName>
    <alternativeName>
        <fullName evidence="2 5">Proteasome inhibitor PI31-like protein SPAC15E1.10</fullName>
    </alternativeName>
</protein>
<proteinExistence type="inferred from homology"/>
<comment type="function">
    <text evidence="1">May play a role in the establishment of transcriptional silencing boundaries, preventing the propagation of heterochromatic silencing.</text>
</comment>
<comment type="subunit">
    <text evidence="1">Interacts with the 20S proteasome.</text>
</comment>
<comment type="subcellular location">
    <subcellularLocation>
        <location evidence="4">Cytoplasm</location>
    </subcellularLocation>
    <subcellularLocation>
        <location evidence="4">Nucleus</location>
    </subcellularLocation>
</comment>
<comment type="similarity">
    <text evidence="5">Belongs to the proteasome inhibitor PI31 family.</text>
</comment>